<reference key="1">
    <citation type="journal article" date="2012" name="Stand. Genomic Sci.">
        <title>Complete genome sequence of Polynucleobacter necessarius subsp. asymbioticus type strain (QLW-P1DMWA-1(T)).</title>
        <authorList>
            <person name="Meincke L."/>
            <person name="Copeland A."/>
            <person name="Lapidus A."/>
            <person name="Lucas S."/>
            <person name="Berry K.W."/>
            <person name="Del Rio T.G."/>
            <person name="Hammon N."/>
            <person name="Dalin E."/>
            <person name="Tice H."/>
            <person name="Pitluck S."/>
            <person name="Richardson P."/>
            <person name="Bruce D."/>
            <person name="Goodwin L."/>
            <person name="Han C."/>
            <person name="Tapia R."/>
            <person name="Detter J.C."/>
            <person name="Schmutz J."/>
            <person name="Brettin T."/>
            <person name="Larimer F."/>
            <person name="Land M."/>
            <person name="Hauser L."/>
            <person name="Kyrpides N.C."/>
            <person name="Ivanova N."/>
            <person name="Goker M."/>
            <person name="Woyke T."/>
            <person name="Wu Q.L."/>
            <person name="Pockl M."/>
            <person name="Hahn M.W."/>
            <person name="Klenk H.P."/>
        </authorList>
    </citation>
    <scope>NUCLEOTIDE SEQUENCE [LARGE SCALE GENOMIC DNA]</scope>
    <source>
        <strain>DSM 18221 / CIP 109841 / QLW-P1DMWA-1</strain>
    </source>
</reference>
<evidence type="ECO:0000255" key="1">
    <source>
        <dbReference type="HAMAP-Rule" id="MF_00664"/>
    </source>
</evidence>
<sequence length="215" mass="24003">MMYPHPIIAKEGWPYLALIGIVTLPVHYIGGIAWSWPLWIIFIFVLQFFRDPQRIPAMGRDLVLSPADGRIVVVEKTNDPYADREALKISVFMNVFNVHSNRSAVNGLVKEIQYFPGKFVNADLDKASTENERNAVVIDANGHIVTLVQVAGLIARRILCYIHVGDRLKAGERYGFIRFGSRVDVYLPLTAEPLVSVGDKVFATNTALARLPGLD</sequence>
<comment type="function">
    <text evidence="1">Catalyzes the formation of phosphatidylethanolamine (PtdEtn) from phosphatidylserine (PtdSer).</text>
</comment>
<comment type="catalytic activity">
    <reaction evidence="1">
        <text>a 1,2-diacyl-sn-glycero-3-phospho-L-serine + H(+) = a 1,2-diacyl-sn-glycero-3-phosphoethanolamine + CO2</text>
        <dbReference type="Rhea" id="RHEA:20828"/>
        <dbReference type="ChEBI" id="CHEBI:15378"/>
        <dbReference type="ChEBI" id="CHEBI:16526"/>
        <dbReference type="ChEBI" id="CHEBI:57262"/>
        <dbReference type="ChEBI" id="CHEBI:64612"/>
        <dbReference type="EC" id="4.1.1.65"/>
    </reaction>
</comment>
<comment type="cofactor">
    <cofactor evidence="1">
        <name>pyruvate</name>
        <dbReference type="ChEBI" id="CHEBI:15361"/>
    </cofactor>
    <text evidence="1">Binds 1 pyruvoyl group covalently per subunit.</text>
</comment>
<comment type="pathway">
    <text evidence="1">Phospholipid metabolism; phosphatidylethanolamine biosynthesis; phosphatidylethanolamine from CDP-diacylglycerol: step 2/2.</text>
</comment>
<comment type="subunit">
    <text evidence="1">Heterodimer of a large membrane-associated beta subunit and a small pyruvoyl-containing alpha subunit.</text>
</comment>
<comment type="subcellular location">
    <subcellularLocation>
        <location evidence="1">Cell membrane</location>
        <topology evidence="1">Peripheral membrane protein</topology>
    </subcellularLocation>
</comment>
<comment type="PTM">
    <text evidence="1">Is synthesized initially as an inactive proenzyme. Formation of the active enzyme involves a self-maturation process in which the active site pyruvoyl group is generated from an internal serine residue via an autocatalytic post-translational modification. Two non-identical subunits are generated from the proenzyme in this reaction, and the pyruvate is formed at the N-terminus of the alpha chain, which is derived from the carboxyl end of the proenzyme. The post-translation cleavage follows an unusual pathway, termed non-hydrolytic serinolysis, in which the side chain hydroxyl group of the serine supplies its oxygen atom to form the C-terminus of the beta chain, while the remainder of the serine residue undergoes an oxidative deamination to produce ammonia and the pyruvoyl prosthetic group on the alpha chain.</text>
</comment>
<comment type="similarity">
    <text evidence="1">Belongs to the phosphatidylserine decarboxylase family. PSD-A subfamily.</text>
</comment>
<name>PSD_POLAQ</name>
<feature type="chain" id="PRO_1000082930" description="Phosphatidylserine decarboxylase beta chain" evidence="1">
    <location>
        <begin position="1"/>
        <end position="180"/>
    </location>
</feature>
<feature type="chain" id="PRO_1000082931" description="Phosphatidylserine decarboxylase alpha chain" evidence="1">
    <location>
        <begin position="181"/>
        <end position="215"/>
    </location>
</feature>
<feature type="active site" description="Schiff-base intermediate with substrate; via pyruvic acid" evidence="1">
    <location>
        <position position="181"/>
    </location>
</feature>
<feature type="site" description="Cleavage (non-hydrolytic); by autocatalysis" evidence="1">
    <location>
        <begin position="180"/>
        <end position="181"/>
    </location>
</feature>
<feature type="modified residue" description="Pyruvic acid (Ser); by autocatalysis" evidence="1">
    <location>
        <position position="181"/>
    </location>
</feature>
<accession>A4SXR2</accession>
<dbReference type="EC" id="4.1.1.65" evidence="1"/>
<dbReference type="EMBL" id="CP000655">
    <property type="protein sequence ID" value="ABP34276.1"/>
    <property type="molecule type" value="Genomic_DNA"/>
</dbReference>
<dbReference type="RefSeq" id="WP_011902901.1">
    <property type="nucleotide sequence ID" value="NC_009379.1"/>
</dbReference>
<dbReference type="GeneID" id="31481435"/>
<dbReference type="KEGG" id="pnu:Pnuc_1060"/>
<dbReference type="eggNOG" id="COG0688">
    <property type="taxonomic scope" value="Bacteria"/>
</dbReference>
<dbReference type="HOGENOM" id="CLU_072492_0_0_4"/>
<dbReference type="UniPathway" id="UPA00558">
    <property type="reaction ID" value="UER00616"/>
</dbReference>
<dbReference type="Proteomes" id="UP000000231">
    <property type="component" value="Chromosome"/>
</dbReference>
<dbReference type="GO" id="GO:0005886">
    <property type="term" value="C:plasma membrane"/>
    <property type="evidence" value="ECO:0007669"/>
    <property type="project" value="UniProtKB-SubCell"/>
</dbReference>
<dbReference type="GO" id="GO:0004609">
    <property type="term" value="F:phosphatidylserine decarboxylase activity"/>
    <property type="evidence" value="ECO:0007669"/>
    <property type="project" value="UniProtKB-UniRule"/>
</dbReference>
<dbReference type="GO" id="GO:0006646">
    <property type="term" value="P:phosphatidylethanolamine biosynthetic process"/>
    <property type="evidence" value="ECO:0007669"/>
    <property type="project" value="UniProtKB-UniRule"/>
</dbReference>
<dbReference type="HAMAP" id="MF_00664">
    <property type="entry name" value="PS_decarb_PSD_A"/>
    <property type="match status" value="1"/>
</dbReference>
<dbReference type="InterPro" id="IPR003817">
    <property type="entry name" value="PS_Dcarbxylase"/>
</dbReference>
<dbReference type="InterPro" id="IPR033175">
    <property type="entry name" value="PSD-A"/>
</dbReference>
<dbReference type="NCBIfam" id="NF003678">
    <property type="entry name" value="PRK05305.1-2"/>
    <property type="match status" value="1"/>
</dbReference>
<dbReference type="NCBIfam" id="NF003680">
    <property type="entry name" value="PRK05305.1-5"/>
    <property type="match status" value="1"/>
</dbReference>
<dbReference type="PANTHER" id="PTHR35809">
    <property type="entry name" value="ARCHAETIDYLSERINE DECARBOXYLASE PROENZYME-RELATED"/>
    <property type="match status" value="1"/>
</dbReference>
<dbReference type="PANTHER" id="PTHR35809:SF1">
    <property type="entry name" value="ARCHAETIDYLSERINE DECARBOXYLASE PROENZYME-RELATED"/>
    <property type="match status" value="1"/>
</dbReference>
<dbReference type="Pfam" id="PF02666">
    <property type="entry name" value="PS_Dcarbxylase"/>
    <property type="match status" value="1"/>
</dbReference>
<protein>
    <recommendedName>
        <fullName evidence="1">Phosphatidylserine decarboxylase proenzyme</fullName>
        <ecNumber evidence="1">4.1.1.65</ecNumber>
    </recommendedName>
    <component>
        <recommendedName>
            <fullName evidence="1">Phosphatidylserine decarboxylase alpha chain</fullName>
        </recommendedName>
    </component>
    <component>
        <recommendedName>
            <fullName evidence="1">Phosphatidylserine decarboxylase beta chain</fullName>
        </recommendedName>
    </component>
</protein>
<proteinExistence type="inferred from homology"/>
<organism>
    <name type="scientific">Polynucleobacter asymbioticus (strain DSM 18221 / CIP 109841 / QLW-P1DMWA-1)</name>
    <name type="common">Polynucleobacter necessarius subsp. asymbioticus</name>
    <dbReference type="NCBI Taxonomy" id="312153"/>
    <lineage>
        <taxon>Bacteria</taxon>
        <taxon>Pseudomonadati</taxon>
        <taxon>Pseudomonadota</taxon>
        <taxon>Betaproteobacteria</taxon>
        <taxon>Burkholderiales</taxon>
        <taxon>Burkholderiaceae</taxon>
        <taxon>Polynucleobacter</taxon>
    </lineage>
</organism>
<gene>
    <name evidence="1" type="primary">psd</name>
    <name type="ordered locus">Pnuc_1060</name>
</gene>
<keyword id="KW-1003">Cell membrane</keyword>
<keyword id="KW-0210">Decarboxylase</keyword>
<keyword id="KW-0444">Lipid biosynthesis</keyword>
<keyword id="KW-0443">Lipid metabolism</keyword>
<keyword id="KW-0456">Lyase</keyword>
<keyword id="KW-0472">Membrane</keyword>
<keyword id="KW-0594">Phospholipid biosynthesis</keyword>
<keyword id="KW-1208">Phospholipid metabolism</keyword>
<keyword id="KW-0670">Pyruvate</keyword>
<keyword id="KW-1185">Reference proteome</keyword>
<keyword id="KW-0865">Zymogen</keyword>